<name>Y394_DEIRA</name>
<accession>Q9RXC1</accession>
<sequence>MPDARRRPERQTAAVSFSARSFPALHSVLAPTALAGLVSETYGLTQPALTLLRRGLNDTSRVQSGERRTILRVYRCGWRTPAEVGWELAFLQHLAGRGVRVSSPLPRADGALFGVLDAAEGPRAYAMFEYLPGRALENTPADAALYGQCAAGLHDAADPFTAPGRLALDLNHLLTEPLRQMRPLLTEFPDLAAPLEAAAERTQARLTALAPGLSWGACHGDLHEANARLTPENEVGLFDFDCAGPGFRAYDLAVYWWSQVTQGQGAEEVQPLWDAFLGAYRERRPLTDADLAALPHFVAARALWFMGLMAGRAAEFGTETLGRPFFEFGLNFLTEWEERHGA</sequence>
<organism>
    <name type="scientific">Deinococcus radiodurans (strain ATCC 13939 / DSM 20539 / JCM 16871 / CCUG 27074 / LMG 4051 / NBRC 15346 / NCIMB 9279 / VKM B-1422 / R1)</name>
    <dbReference type="NCBI Taxonomy" id="243230"/>
    <lineage>
        <taxon>Bacteria</taxon>
        <taxon>Thermotogati</taxon>
        <taxon>Deinococcota</taxon>
        <taxon>Deinococci</taxon>
        <taxon>Deinococcales</taxon>
        <taxon>Deinococcaceae</taxon>
        <taxon>Deinococcus</taxon>
    </lineage>
</organism>
<reference key="1">
    <citation type="journal article" date="1999" name="Science">
        <title>Genome sequence of the radioresistant bacterium Deinococcus radiodurans R1.</title>
        <authorList>
            <person name="White O."/>
            <person name="Eisen J.A."/>
            <person name="Heidelberg J.F."/>
            <person name="Hickey E.K."/>
            <person name="Peterson J.D."/>
            <person name="Dodson R.J."/>
            <person name="Haft D.H."/>
            <person name="Gwinn M.L."/>
            <person name="Nelson W.C."/>
            <person name="Richardson D.L."/>
            <person name="Moffat K.S."/>
            <person name="Qin H."/>
            <person name="Jiang L."/>
            <person name="Pamphile W."/>
            <person name="Crosby M."/>
            <person name="Shen M."/>
            <person name="Vamathevan J.J."/>
            <person name="Lam P."/>
            <person name="McDonald L.A."/>
            <person name="Utterback T.R."/>
            <person name="Zalewski C."/>
            <person name="Makarova K.S."/>
            <person name="Aravind L."/>
            <person name="Daly M.J."/>
            <person name="Minton K.W."/>
            <person name="Fleischmann R.D."/>
            <person name="Ketchum K.A."/>
            <person name="Nelson K.E."/>
            <person name="Salzberg S.L."/>
            <person name="Smith H.O."/>
            <person name="Venter J.C."/>
            <person name="Fraser C.M."/>
        </authorList>
    </citation>
    <scope>NUCLEOTIDE SEQUENCE [LARGE SCALE GENOMIC DNA]</scope>
    <source>
        <strain>ATCC 13939 / DSM 20539 / JCM 16871 / CCUG 27074 / LMG 4051 / NBRC 15346 / NCIMB 9279 / VKM B-1422 / R1</strain>
    </source>
</reference>
<keyword id="KW-1185">Reference proteome</keyword>
<evidence type="ECO:0000305" key="1"/>
<gene>
    <name type="ordered locus">DR_0394</name>
</gene>
<dbReference type="EMBL" id="AE000513">
    <property type="protein sequence ID" value="AAF09972.1"/>
    <property type="molecule type" value="Genomic_DNA"/>
</dbReference>
<dbReference type="PIR" id="H75524">
    <property type="entry name" value="H75524"/>
</dbReference>
<dbReference type="RefSeq" id="NP_294117.1">
    <property type="nucleotide sequence ID" value="NC_001263.1"/>
</dbReference>
<dbReference type="SMR" id="Q9RXC1"/>
<dbReference type="FunCoup" id="Q9RXC1">
    <property type="interactions" value="2"/>
</dbReference>
<dbReference type="STRING" id="243230.DR_0394"/>
<dbReference type="PaxDb" id="243230-DR_0394"/>
<dbReference type="EnsemblBacteria" id="AAF09972">
    <property type="protein sequence ID" value="AAF09972"/>
    <property type="gene ID" value="DR_0394"/>
</dbReference>
<dbReference type="KEGG" id="dra:DR_0394"/>
<dbReference type="PATRIC" id="fig|243230.17.peg.568"/>
<dbReference type="eggNOG" id="COG2334">
    <property type="taxonomic scope" value="Bacteria"/>
</dbReference>
<dbReference type="HOGENOM" id="CLU_044821_0_0_0"/>
<dbReference type="InParanoid" id="Q9RXC1"/>
<dbReference type="OrthoDB" id="9800774at2"/>
<dbReference type="Proteomes" id="UP000002524">
    <property type="component" value="Chromosome 1"/>
</dbReference>
<dbReference type="GO" id="GO:0004413">
    <property type="term" value="F:homoserine kinase activity"/>
    <property type="evidence" value="ECO:0000318"/>
    <property type="project" value="GO_Central"/>
</dbReference>
<dbReference type="GO" id="GO:0009088">
    <property type="term" value="P:threonine biosynthetic process"/>
    <property type="evidence" value="ECO:0000318"/>
    <property type="project" value="GO_Central"/>
</dbReference>
<dbReference type="Gene3D" id="3.90.1200.10">
    <property type="match status" value="1"/>
</dbReference>
<dbReference type="Gene3D" id="3.30.200.20">
    <property type="entry name" value="Phosphorylase Kinase, domain 1"/>
    <property type="match status" value="1"/>
</dbReference>
<dbReference type="InterPro" id="IPR002575">
    <property type="entry name" value="Aminoglycoside_PTrfase"/>
</dbReference>
<dbReference type="InterPro" id="IPR011009">
    <property type="entry name" value="Kinase-like_dom_sf"/>
</dbReference>
<dbReference type="InterPro" id="IPR050249">
    <property type="entry name" value="Pseudomonas-type_ThrB"/>
</dbReference>
<dbReference type="PANTHER" id="PTHR21064:SF6">
    <property type="entry name" value="AMINOGLYCOSIDE PHOSPHOTRANSFERASE DOMAIN-CONTAINING PROTEIN"/>
    <property type="match status" value="1"/>
</dbReference>
<dbReference type="PANTHER" id="PTHR21064">
    <property type="entry name" value="AMINOGLYCOSIDE PHOSPHOTRANSFERASE DOMAIN-CONTAINING PROTEIN-RELATED"/>
    <property type="match status" value="1"/>
</dbReference>
<dbReference type="Pfam" id="PF01636">
    <property type="entry name" value="APH"/>
    <property type="match status" value="1"/>
</dbReference>
<dbReference type="SUPFAM" id="SSF56112">
    <property type="entry name" value="Protein kinase-like (PK-like)"/>
    <property type="match status" value="1"/>
</dbReference>
<proteinExistence type="inferred from homology"/>
<protein>
    <recommendedName>
        <fullName>Uncharacterized protein DR_0394</fullName>
    </recommendedName>
</protein>
<comment type="similarity">
    <text evidence="1">Belongs to the pseudomonas-type ThrB family.</text>
</comment>
<feature type="chain" id="PRO_0000172202" description="Uncharacterized protein DR_0394">
    <location>
        <begin position="1"/>
        <end position="342"/>
    </location>
</feature>